<comment type="function">
    <text evidence="1 3">May participate in nuclear egress of viral particles. Plays a role in the dispersal of several host nucleolar proteins including NCL/nucleolin and NPM1. Since deletion of host NCL/nucleolin negatively impact on nuclear egress, UL24 supposedly acts on this process through its effect on host nucleoli (By similarity). Induces cell cycle arrest in host cells at the G2/M phase following by apoptosis. The mechanism involves the inhibition of host mitotic complex cyclin-B/CDK1.</text>
</comment>
<comment type="subcellular location">
    <subcellularLocation>
        <location evidence="1">Virion</location>
    </subcellularLocation>
    <subcellularLocation>
        <location evidence="1">Host cytoplasm</location>
    </subcellularLocation>
    <subcellularLocation>
        <location evidence="1">Host nucleus</location>
        <location evidence="1">Host nucleolus</location>
    </subcellularLocation>
    <subcellularLocation>
        <location evidence="1">Host Golgi apparatus</location>
    </subcellularLocation>
</comment>
<comment type="induction">
    <text>Expressed late in the infection cycle.</text>
</comment>
<comment type="similarity">
    <text evidence="4">Belongs to the herpesviridae UL24 family.</text>
</comment>
<organismHost>
    <name type="scientific">Homo sapiens</name>
    <name type="common">Human</name>
    <dbReference type="NCBI Taxonomy" id="9606"/>
</organismHost>
<keyword id="KW-1035">Host cytoplasm</keyword>
<keyword id="KW-1079">Host G2/M cell cycle arrest by virus</keyword>
<keyword id="KW-1040">Host Golgi apparatus</keyword>
<keyword id="KW-1048">Host nucleus</keyword>
<keyword id="KW-0945">Host-virus interaction</keyword>
<keyword id="KW-1121">Modulation of host cell cycle by virus</keyword>
<keyword id="KW-1185">Reference proteome</keyword>
<keyword id="KW-0946">Virion</keyword>
<protein>
    <recommendedName>
        <fullName>Protein UL24 homolog</fullName>
    </recommendedName>
</protein>
<evidence type="ECO:0000250" key="1"/>
<evidence type="ECO:0000256" key="2">
    <source>
        <dbReference type="SAM" id="MobiDB-lite"/>
    </source>
</evidence>
<evidence type="ECO:0000269" key="3">
    <source>
    </source>
</evidence>
<evidence type="ECO:0000305" key="4"/>
<dbReference type="EMBL" id="AF148805">
    <property type="protein sequence ID" value="ABD28871.1"/>
    <property type="molecule type" value="Genomic_DNA"/>
</dbReference>
<dbReference type="RefSeq" id="YP_001129373.1">
    <property type="nucleotide sequence ID" value="NC_009333.1"/>
</dbReference>
<dbReference type="BioGRID" id="1776980">
    <property type="interactions" value="1"/>
</dbReference>
<dbReference type="BindingDB" id="Q2HRB2"/>
<dbReference type="DNASU" id="4961477"/>
<dbReference type="GeneID" id="4961477"/>
<dbReference type="KEGG" id="vg:4961477"/>
<dbReference type="Proteomes" id="UP000000942">
    <property type="component" value="Segment"/>
</dbReference>
<dbReference type="GO" id="GO:0044177">
    <property type="term" value="C:host cell Golgi apparatus"/>
    <property type="evidence" value="ECO:0007669"/>
    <property type="project" value="UniProtKB-SubCell"/>
</dbReference>
<dbReference type="GO" id="GO:0044196">
    <property type="term" value="C:host cell nucleolus"/>
    <property type="evidence" value="ECO:0007669"/>
    <property type="project" value="UniProtKB-SubCell"/>
</dbReference>
<dbReference type="GO" id="GO:0044423">
    <property type="term" value="C:virion component"/>
    <property type="evidence" value="ECO:0007669"/>
    <property type="project" value="UniProtKB-KW"/>
</dbReference>
<dbReference type="GO" id="GO:0039592">
    <property type="term" value="P:symbiont-mediated arrest of host cell cycle during G2/M transition"/>
    <property type="evidence" value="ECO:0007669"/>
    <property type="project" value="UniProtKB-KW"/>
</dbReference>
<dbReference type="InterPro" id="IPR002580">
    <property type="entry name" value="Herpes_UL24"/>
</dbReference>
<dbReference type="Pfam" id="PF01646">
    <property type="entry name" value="Herpes_UL24"/>
    <property type="match status" value="1"/>
</dbReference>
<feature type="chain" id="PRO_0000423765" description="Protein UL24 homolog">
    <location>
        <begin position="1"/>
        <end position="257"/>
    </location>
</feature>
<feature type="region of interest" description="Disordered" evidence="2">
    <location>
        <begin position="193"/>
        <end position="257"/>
    </location>
</feature>
<proteinExistence type="evidence at transcript level"/>
<name>UL24_HHV8P</name>
<gene>
    <name type="primary">ORF20</name>
</gene>
<reference key="1">
    <citation type="journal article" date="1999" name="J. Virol.">
        <title>Identification of a spliced gene from Kaposi's sarcoma-associated herpesvirus encoding a protein with similarities to latent membrane proteins 1 and 2A of Epstein-Barr virus.</title>
        <authorList>
            <person name="Glenn M."/>
            <person name="Rainbow L."/>
            <person name="Aurade F."/>
            <person name="Davison A."/>
            <person name="Schulz T.F."/>
        </authorList>
    </citation>
    <scope>NUCLEOTIDE SEQUENCE [LARGE SCALE GENOMIC DNA]</scope>
</reference>
<reference key="2">
    <citation type="journal article" date="2006" name="J. Gen. Virol.">
        <title>Kaposi's sarcoma-associated herpesvirus immune modulation: an overview.</title>
        <authorList>
            <person name="Rezaee S.A.R."/>
            <person name="Cunningham C."/>
            <person name="Davison A.J."/>
            <person name="Blackbourn D.J."/>
        </authorList>
    </citation>
    <scope>NUCLEOTIDE SEQUENCE [LARGE SCALE GENOMIC DNA]</scope>
</reference>
<reference key="3">
    <citation type="journal article" date="2009" name="Arch. Virol.">
        <title>The conserved UL24 family of human alpha, beta and gamma herpesviruses induces cell cycle arrest and inactivation of the cyclinB/cdc2 complex.</title>
        <authorList>
            <person name="Nascimento R."/>
            <person name="Dias J.D."/>
            <person name="Parkhouse R.M."/>
        </authorList>
    </citation>
    <scope>FUNCTION</scope>
</reference>
<sequence length="257" mass="28413">MVRPTEAEVKKSLSRLPAARKRAGNRAHLATYRRLLKYSTLPDLWRFLSSRPQNPPLGHHRLFFEVTLGHRIADCVILVSGGHQPVCYVVELKTCLSHQLIPTNTVRTSQRAQGLCQLSDSIHYIAHSAPPGTEAWTITPLLIFKNQKTLKTVYSESPGAFPTPVHTTEGKLCAFLTARENADIRKVLSKVPKKPKMDRGGKILGPTPGKRAVYSQAHHGRNKKGRPWTAQPTRAKSRTKDKGTPAFPRAGPACSGP</sequence>
<organism>
    <name type="scientific">Human herpesvirus 8 type P (isolate GK18)</name>
    <name type="common">HHV-8</name>
    <name type="synonym">Kaposi's sarcoma-associated herpesvirus</name>
    <dbReference type="NCBI Taxonomy" id="868565"/>
    <lineage>
        <taxon>Viruses</taxon>
        <taxon>Duplodnaviria</taxon>
        <taxon>Heunggongvirae</taxon>
        <taxon>Peploviricota</taxon>
        <taxon>Herviviricetes</taxon>
        <taxon>Herpesvirales</taxon>
        <taxon>Orthoherpesviridae</taxon>
        <taxon>Gammaherpesvirinae</taxon>
        <taxon>Rhadinovirus</taxon>
        <taxon>Rhadinovirus humangamma8</taxon>
        <taxon>Human herpesvirus 8</taxon>
    </lineage>
</organism>
<accession>Q2HRB2</accession>